<accession>Q88V23</accession>
<accession>F9UQI3</accession>
<name>DAPH_LACPL</name>
<dbReference type="EC" id="2.3.1.89" evidence="1"/>
<dbReference type="EMBL" id="AL935263">
    <property type="protein sequence ID" value="CCC79472.1"/>
    <property type="molecule type" value="Genomic_DNA"/>
</dbReference>
<dbReference type="RefSeq" id="YP_004889986.1">
    <property type="nucleotide sequence ID" value="NC_004567.2"/>
</dbReference>
<dbReference type="SMR" id="Q88V23"/>
<dbReference type="STRING" id="220668.lp_2264"/>
<dbReference type="EnsemblBacteria" id="CCC79472">
    <property type="protein sequence ID" value="CCC79472"/>
    <property type="gene ID" value="lp_2264"/>
</dbReference>
<dbReference type="KEGG" id="lpl:lp_2264"/>
<dbReference type="PATRIC" id="fig|220668.9.peg.1915"/>
<dbReference type="eggNOG" id="COG2171">
    <property type="taxonomic scope" value="Bacteria"/>
</dbReference>
<dbReference type="HOGENOM" id="CLU_103751_0_0_9"/>
<dbReference type="OrthoDB" id="9788080at2"/>
<dbReference type="PhylomeDB" id="Q88V23"/>
<dbReference type="UniPathway" id="UPA00034">
    <property type="reaction ID" value="UER00022"/>
</dbReference>
<dbReference type="Proteomes" id="UP000000432">
    <property type="component" value="Chromosome"/>
</dbReference>
<dbReference type="GO" id="GO:0047200">
    <property type="term" value="F:tetrahydrodipicolinate N-acetyltransferase activity"/>
    <property type="evidence" value="ECO:0007669"/>
    <property type="project" value="UniProtKB-EC"/>
</dbReference>
<dbReference type="GO" id="GO:0019877">
    <property type="term" value="P:diaminopimelate biosynthetic process"/>
    <property type="evidence" value="ECO:0007669"/>
    <property type="project" value="UniProtKB-UniRule"/>
</dbReference>
<dbReference type="GO" id="GO:0009089">
    <property type="term" value="P:lysine biosynthetic process via diaminopimelate"/>
    <property type="evidence" value="ECO:0007669"/>
    <property type="project" value="UniProtKB-UniRule"/>
</dbReference>
<dbReference type="CDD" id="cd03350">
    <property type="entry name" value="LbH_THP_succinylT"/>
    <property type="match status" value="1"/>
</dbReference>
<dbReference type="Gene3D" id="2.160.10.10">
    <property type="entry name" value="Hexapeptide repeat proteins"/>
    <property type="match status" value="1"/>
</dbReference>
<dbReference type="Gene3D" id="3.30.70.250">
    <property type="entry name" value="Malonyl-CoA ACP transacylase, ACP-binding"/>
    <property type="match status" value="1"/>
</dbReference>
<dbReference type="HAMAP" id="MF_01691">
    <property type="entry name" value="DapH"/>
    <property type="match status" value="1"/>
</dbReference>
<dbReference type="InterPro" id="IPR019873">
    <property type="entry name" value="DapH"/>
</dbReference>
<dbReference type="InterPro" id="IPR013710">
    <property type="entry name" value="DapH_N"/>
</dbReference>
<dbReference type="InterPro" id="IPR001451">
    <property type="entry name" value="Hexapep"/>
</dbReference>
<dbReference type="InterPro" id="IPR018357">
    <property type="entry name" value="Hexapep_transf_CS"/>
</dbReference>
<dbReference type="InterPro" id="IPR050179">
    <property type="entry name" value="Trans_hexapeptide_repeat"/>
</dbReference>
<dbReference type="InterPro" id="IPR011004">
    <property type="entry name" value="Trimer_LpxA-like_sf"/>
</dbReference>
<dbReference type="NCBIfam" id="TIGR03532">
    <property type="entry name" value="DapD_Ac"/>
    <property type="match status" value="1"/>
</dbReference>
<dbReference type="PANTHER" id="PTHR43300:SF10">
    <property type="entry name" value="2,3,4,5-TETRAHYDROPYRIDINE-2,6-DICARBOXYLATE N-ACETYLTRANSFERASE"/>
    <property type="match status" value="1"/>
</dbReference>
<dbReference type="PANTHER" id="PTHR43300">
    <property type="entry name" value="ACETYLTRANSFERASE"/>
    <property type="match status" value="1"/>
</dbReference>
<dbReference type="Pfam" id="PF08503">
    <property type="entry name" value="DapH_N"/>
    <property type="match status" value="1"/>
</dbReference>
<dbReference type="Pfam" id="PF00132">
    <property type="entry name" value="Hexapep"/>
    <property type="match status" value="1"/>
</dbReference>
<dbReference type="Pfam" id="PF14602">
    <property type="entry name" value="Hexapep_2"/>
    <property type="match status" value="1"/>
</dbReference>
<dbReference type="SUPFAM" id="SSF51161">
    <property type="entry name" value="Trimeric LpxA-like enzymes"/>
    <property type="match status" value="1"/>
</dbReference>
<dbReference type="PROSITE" id="PS00101">
    <property type="entry name" value="HEXAPEP_TRANSFERASES"/>
    <property type="match status" value="1"/>
</dbReference>
<sequence length="236" mass="24495">MAKLDAQSIINYIGSAKKKTPVKVYVKGALDQLNVPAGIKTFFSGNAGVLFGDWADVEPFLKANAANIEDYELENDARNSAVPMADLKQYNARIEPGAIIRDQVLIGDNAVIMMGAVINIGAEIGEGSMIDMGAILGGRAIVGKNCHIGAGTVLAGVVEPPSAKPVQIDDDVLIGANAAVLEGVHVGKGAVVAAGAIVIEDVAPNTVVGGVPARKLKDIDDKTKSKTELMAELRNL</sequence>
<protein>
    <recommendedName>
        <fullName evidence="1">2,3,4,5-tetrahydropyridine-2,6-dicarboxylate N-acetyltransferase</fullName>
        <ecNumber evidence="1">2.3.1.89</ecNumber>
    </recommendedName>
    <alternativeName>
        <fullName evidence="1">Tetrahydrodipicolinate N-acetyltransferase</fullName>
        <shortName evidence="1">THP acetyltransferase</shortName>
        <shortName evidence="1">Tetrahydropicolinate acetylase</shortName>
    </alternativeName>
</protein>
<evidence type="ECO:0000255" key="1">
    <source>
        <dbReference type="HAMAP-Rule" id="MF_01691"/>
    </source>
</evidence>
<gene>
    <name evidence="1" type="primary">dapH</name>
    <name type="ordered locus">lp_2264</name>
</gene>
<comment type="function">
    <text evidence="1">Catalyzes the transfer of an acetyl group from acetyl-CoA to tetrahydrodipicolinate.</text>
</comment>
<comment type="catalytic activity">
    <reaction evidence="1">
        <text>(S)-2,3,4,5-tetrahydrodipicolinate + acetyl-CoA + H2O = L-2-acetamido-6-oxoheptanedioate + CoA</text>
        <dbReference type="Rhea" id="RHEA:13085"/>
        <dbReference type="ChEBI" id="CHEBI:15377"/>
        <dbReference type="ChEBI" id="CHEBI:16845"/>
        <dbReference type="ChEBI" id="CHEBI:57287"/>
        <dbReference type="ChEBI" id="CHEBI:57288"/>
        <dbReference type="ChEBI" id="CHEBI:58117"/>
        <dbReference type="EC" id="2.3.1.89"/>
    </reaction>
</comment>
<comment type="pathway">
    <text evidence="1">Amino-acid biosynthesis; L-lysine biosynthesis via DAP pathway; LL-2,6-diaminopimelate from (S)-tetrahydrodipicolinate (acetylase route): step 1/3.</text>
</comment>
<comment type="similarity">
    <text evidence="1">Belongs to the transferase hexapeptide repeat family. DapH subfamily.</text>
</comment>
<proteinExistence type="inferred from homology"/>
<reference key="1">
    <citation type="journal article" date="2003" name="Proc. Natl. Acad. Sci. U.S.A.">
        <title>Complete genome sequence of Lactobacillus plantarum WCFS1.</title>
        <authorList>
            <person name="Kleerebezem M."/>
            <person name="Boekhorst J."/>
            <person name="van Kranenburg R."/>
            <person name="Molenaar D."/>
            <person name="Kuipers O.P."/>
            <person name="Leer R."/>
            <person name="Tarchini R."/>
            <person name="Peters S.A."/>
            <person name="Sandbrink H.M."/>
            <person name="Fiers M.W.E.J."/>
            <person name="Stiekema W."/>
            <person name="Klein Lankhorst R.M."/>
            <person name="Bron P.A."/>
            <person name="Hoffer S.M."/>
            <person name="Nierop Groot M.N."/>
            <person name="Kerkhoven R."/>
            <person name="De Vries M."/>
            <person name="Ursing B."/>
            <person name="De Vos W.M."/>
            <person name="Siezen R.J."/>
        </authorList>
    </citation>
    <scope>NUCLEOTIDE SEQUENCE [LARGE SCALE GENOMIC DNA]</scope>
    <source>
        <strain>ATCC BAA-793 / NCIMB 8826 / WCFS1</strain>
    </source>
</reference>
<reference key="2">
    <citation type="journal article" date="2012" name="J. Bacteriol.">
        <title>Complete resequencing and reannotation of the Lactobacillus plantarum WCFS1 genome.</title>
        <authorList>
            <person name="Siezen R.J."/>
            <person name="Francke C."/>
            <person name="Renckens B."/>
            <person name="Boekhorst J."/>
            <person name="Wels M."/>
            <person name="Kleerebezem M."/>
            <person name="van Hijum S.A."/>
        </authorList>
    </citation>
    <scope>NUCLEOTIDE SEQUENCE [LARGE SCALE GENOMIC DNA]</scope>
    <scope>GENOME REANNOTATION</scope>
    <source>
        <strain>ATCC BAA-793 / NCIMB 8826 / WCFS1</strain>
    </source>
</reference>
<keyword id="KW-0012">Acyltransferase</keyword>
<keyword id="KW-0028">Amino-acid biosynthesis</keyword>
<keyword id="KW-0220">Diaminopimelate biosynthesis</keyword>
<keyword id="KW-0457">Lysine biosynthesis</keyword>
<keyword id="KW-1185">Reference proteome</keyword>
<keyword id="KW-0677">Repeat</keyword>
<keyword id="KW-0808">Transferase</keyword>
<organism>
    <name type="scientific">Lactiplantibacillus plantarum (strain ATCC BAA-793 / NCIMB 8826 / WCFS1)</name>
    <name type="common">Lactobacillus plantarum</name>
    <dbReference type="NCBI Taxonomy" id="220668"/>
    <lineage>
        <taxon>Bacteria</taxon>
        <taxon>Bacillati</taxon>
        <taxon>Bacillota</taxon>
        <taxon>Bacilli</taxon>
        <taxon>Lactobacillales</taxon>
        <taxon>Lactobacillaceae</taxon>
        <taxon>Lactiplantibacillus</taxon>
    </lineage>
</organism>
<feature type="chain" id="PRO_0000376666" description="2,3,4,5-tetrahydropyridine-2,6-dicarboxylate N-acetyltransferase">
    <location>
        <begin position="1"/>
        <end position="236"/>
    </location>
</feature>